<reference key="1">
    <citation type="journal article" date="2000" name="Nature">
        <title>The complete sequence of the mucosal pathogen Ureaplasma urealyticum.</title>
        <authorList>
            <person name="Glass J.I."/>
            <person name="Lefkowitz E.J."/>
            <person name="Glass J.S."/>
            <person name="Heiner C.R."/>
            <person name="Chen E.Y."/>
            <person name="Cassell G.H."/>
        </authorList>
    </citation>
    <scope>NUCLEOTIDE SEQUENCE [LARGE SCALE GENOMIC DNA]</scope>
    <source>
        <strain>ATCC 700970</strain>
    </source>
</reference>
<dbReference type="EMBL" id="AF222894">
    <property type="protein sequence ID" value="AAF30755.1"/>
    <property type="molecule type" value="Genomic_DNA"/>
</dbReference>
<dbReference type="RefSeq" id="WP_006688488.1">
    <property type="nucleotide sequence ID" value="NC_002162.1"/>
</dbReference>
<dbReference type="SMR" id="Q9PQE5"/>
<dbReference type="STRING" id="273119.UU346"/>
<dbReference type="EnsemblBacteria" id="AAF30755">
    <property type="protein sequence ID" value="AAF30755"/>
    <property type="gene ID" value="UU346"/>
</dbReference>
<dbReference type="GeneID" id="29672429"/>
<dbReference type="KEGG" id="uur:UU346"/>
<dbReference type="eggNOG" id="COG1386">
    <property type="taxonomic scope" value="Bacteria"/>
</dbReference>
<dbReference type="HOGENOM" id="CLU_760629_0_0_14"/>
<dbReference type="OrthoDB" id="9806226at2"/>
<dbReference type="Proteomes" id="UP000000423">
    <property type="component" value="Chromosome"/>
</dbReference>
<dbReference type="GO" id="GO:0005737">
    <property type="term" value="C:cytoplasm"/>
    <property type="evidence" value="ECO:0007669"/>
    <property type="project" value="UniProtKB-SubCell"/>
</dbReference>
<dbReference type="GO" id="GO:0051301">
    <property type="term" value="P:cell division"/>
    <property type="evidence" value="ECO:0007669"/>
    <property type="project" value="UniProtKB-KW"/>
</dbReference>
<dbReference type="GO" id="GO:0051304">
    <property type="term" value="P:chromosome separation"/>
    <property type="evidence" value="ECO:0007669"/>
    <property type="project" value="InterPro"/>
</dbReference>
<dbReference type="Gene3D" id="1.10.10.10">
    <property type="entry name" value="Winged helix-like DNA-binding domain superfamily/Winged helix DNA-binding domain"/>
    <property type="match status" value="2"/>
</dbReference>
<dbReference type="InterPro" id="IPR005234">
    <property type="entry name" value="ScpB_csome_segregation"/>
</dbReference>
<dbReference type="InterPro" id="IPR036388">
    <property type="entry name" value="WH-like_DNA-bd_sf"/>
</dbReference>
<dbReference type="InterPro" id="IPR036390">
    <property type="entry name" value="WH_DNA-bd_sf"/>
</dbReference>
<dbReference type="NCBIfam" id="NF001106">
    <property type="entry name" value="PRK00135.2-1"/>
    <property type="match status" value="1"/>
</dbReference>
<dbReference type="NCBIfam" id="TIGR00281">
    <property type="entry name" value="SMC-Scp complex subunit ScpB"/>
    <property type="match status" value="1"/>
</dbReference>
<dbReference type="PANTHER" id="PTHR34298">
    <property type="entry name" value="SEGREGATION AND CONDENSATION PROTEIN B"/>
    <property type="match status" value="1"/>
</dbReference>
<dbReference type="PANTHER" id="PTHR34298:SF2">
    <property type="entry name" value="SEGREGATION AND CONDENSATION PROTEIN B"/>
    <property type="match status" value="1"/>
</dbReference>
<dbReference type="Pfam" id="PF04079">
    <property type="entry name" value="SMC_ScpB"/>
    <property type="match status" value="1"/>
</dbReference>
<dbReference type="SUPFAM" id="SSF46785">
    <property type="entry name" value="Winged helix' DNA-binding domain"/>
    <property type="match status" value="2"/>
</dbReference>
<keyword id="KW-0131">Cell cycle</keyword>
<keyword id="KW-0132">Cell division</keyword>
<keyword id="KW-0159">Chromosome partition</keyword>
<keyword id="KW-0963">Cytoplasm</keyword>
<keyword id="KW-1185">Reference proteome</keyword>
<evidence type="ECO:0000250" key="1"/>
<evidence type="ECO:0000305" key="2"/>
<comment type="function">
    <text evidence="1">Participates in chromosomal partition during cell division. May act via the formation of a condensin-like complex containing Smc and ScpA that pull DNA away from mid-cell into both cell halves (By similarity).</text>
</comment>
<comment type="subunit">
    <text evidence="1">Homodimer. Homodimerization may be required to stabilize the binding of ScpA to the Smc head domains. Component of a cohesin-like complex composed of ScpA, ScpB and the Smc homodimer, in which ScpA and ScpB bind to the head domain of Smc. The presence of the three proteins is required for the association of the complex with DNA (By similarity).</text>
</comment>
<comment type="subcellular location">
    <subcellularLocation>
        <location evidence="1">Cytoplasm</location>
    </subcellularLocation>
    <text evidence="1">Associated with two foci at the outer edges of the nucleoid region in young cells, and at four foci within both cell halves in older cells.</text>
</comment>
<comment type="similarity">
    <text evidence="2">Belongs to the ScpB family.</text>
</comment>
<comment type="caution">
    <text evidence="2">Differs from other ScpB proteins because it has a much longer N-terminus.</text>
</comment>
<gene>
    <name type="primary">scpB</name>
    <name type="ordered locus">UU346</name>
</gene>
<proteinExistence type="inferred from homology"/>
<name>SCPB_UREPA</name>
<protein>
    <recommendedName>
        <fullName>Segregation and condensation protein B</fullName>
    </recommendedName>
</protein>
<accession>Q9PQE5</accession>
<organism>
    <name type="scientific">Ureaplasma parvum serovar 3 (strain ATCC 700970)</name>
    <dbReference type="NCBI Taxonomy" id="273119"/>
    <lineage>
        <taxon>Bacteria</taxon>
        <taxon>Bacillati</taxon>
        <taxon>Mycoplasmatota</taxon>
        <taxon>Mycoplasmoidales</taxon>
        <taxon>Mycoplasmoidaceae</taxon>
        <taxon>Ureaplasma</taxon>
    </lineage>
</organism>
<feature type="chain" id="PRO_0000211166" description="Segregation and condensation protein B">
    <location>
        <begin position="1"/>
        <end position="364"/>
    </location>
</feature>
<sequence length="364" mass="42001">MNNDKKNKKNLLNNELDLAKYTLHNLSADNNDDENELELDWDGIDDEIIDNNQQIYQKKHINHKTRLFIEKDDKLNNHEQIESGNEIINQPKALSGQDFLEFVNSKLVQKNNNFKQNSKFLQNQLTNHELLREKLKPQEDFNKIFKTKDINVTEEIKIKDVKKNSSVSFRNSFNINDLNQNQITNIKSIIDSTLFLAGEEGVSLQDLKRTTGLNESSQLKTILNQLQKDYDVDDSGLVLVQFGEKFKLLTQSKNKDALSKFVTTSFRTPLSQRNLETLAIIAYNQPTTRAKIQAIRDRDPKPAIDALLKLNLIIEAGRQDTPGHPILYTVSQKFYDLFGIRNLTELPRLNKEINEFSPIDESTN</sequence>